<proteinExistence type="inferred from homology"/>
<keyword id="KW-0067">ATP-binding</keyword>
<keyword id="KW-0997">Cell inner membrane</keyword>
<keyword id="KW-1003">Cell membrane</keyword>
<keyword id="KW-0418">Kinase</keyword>
<keyword id="KW-0472">Membrane</keyword>
<keyword id="KW-0547">Nucleotide-binding</keyword>
<keyword id="KW-0808">Transferase</keyword>
<keyword id="KW-0812">Transmembrane</keyword>
<keyword id="KW-1133">Transmembrane helix</keyword>
<keyword id="KW-0831">Ubiquinone biosynthesis</keyword>
<feature type="chain" id="PRO_1000123896" description="Probable protein kinase UbiB">
    <location>
        <begin position="1"/>
        <end position="525"/>
    </location>
</feature>
<feature type="transmembrane region" description="Helical" evidence="1">
    <location>
        <begin position="501"/>
        <end position="521"/>
    </location>
</feature>
<feature type="domain" description="Protein kinase" evidence="1">
    <location>
        <begin position="118"/>
        <end position="500"/>
    </location>
</feature>
<feature type="active site" description="Proton acceptor" evidence="1">
    <location>
        <position position="285"/>
    </location>
</feature>
<feature type="binding site" evidence="1">
    <location>
        <begin position="124"/>
        <end position="132"/>
    </location>
    <ligand>
        <name>ATP</name>
        <dbReference type="ChEBI" id="CHEBI:30616"/>
    </ligand>
</feature>
<feature type="binding site" evidence="1">
    <location>
        <position position="150"/>
    </location>
    <ligand>
        <name>ATP</name>
        <dbReference type="ChEBI" id="CHEBI:30616"/>
    </ligand>
</feature>
<dbReference type="EC" id="2.7.-.-" evidence="1"/>
<dbReference type="EMBL" id="CP000570">
    <property type="protein sequence ID" value="ABN82432.1"/>
    <property type="molecule type" value="Genomic_DNA"/>
</dbReference>
<dbReference type="RefSeq" id="WP_004189815.1">
    <property type="nucleotide sequence ID" value="NC_009074.1"/>
</dbReference>
<dbReference type="SMR" id="A3N5V1"/>
<dbReference type="GeneID" id="93059152"/>
<dbReference type="KEGG" id="bpd:BURPS668_0670"/>
<dbReference type="HOGENOM" id="CLU_006533_0_0_4"/>
<dbReference type="UniPathway" id="UPA00232"/>
<dbReference type="GO" id="GO:0005886">
    <property type="term" value="C:plasma membrane"/>
    <property type="evidence" value="ECO:0007669"/>
    <property type="project" value="UniProtKB-SubCell"/>
</dbReference>
<dbReference type="GO" id="GO:0005524">
    <property type="term" value="F:ATP binding"/>
    <property type="evidence" value="ECO:0007669"/>
    <property type="project" value="UniProtKB-KW"/>
</dbReference>
<dbReference type="GO" id="GO:0004672">
    <property type="term" value="F:protein kinase activity"/>
    <property type="evidence" value="ECO:0007669"/>
    <property type="project" value="UniProtKB-UniRule"/>
</dbReference>
<dbReference type="GO" id="GO:0010795">
    <property type="term" value="P:regulation of ubiquinone biosynthetic process"/>
    <property type="evidence" value="ECO:0007669"/>
    <property type="project" value="UniProtKB-UniRule"/>
</dbReference>
<dbReference type="GO" id="GO:0006744">
    <property type="term" value="P:ubiquinone biosynthetic process"/>
    <property type="evidence" value="ECO:0007669"/>
    <property type="project" value="UniProtKB-UniPathway"/>
</dbReference>
<dbReference type="CDD" id="cd13972">
    <property type="entry name" value="UbiB"/>
    <property type="match status" value="1"/>
</dbReference>
<dbReference type="HAMAP" id="MF_00414">
    <property type="entry name" value="UbiB"/>
    <property type="match status" value="1"/>
</dbReference>
<dbReference type="InterPro" id="IPR004147">
    <property type="entry name" value="ABC1_dom"/>
</dbReference>
<dbReference type="InterPro" id="IPR011009">
    <property type="entry name" value="Kinase-like_dom_sf"/>
</dbReference>
<dbReference type="InterPro" id="IPR010232">
    <property type="entry name" value="UbiB"/>
</dbReference>
<dbReference type="InterPro" id="IPR045308">
    <property type="entry name" value="UbiB_bact"/>
</dbReference>
<dbReference type="InterPro" id="IPR050154">
    <property type="entry name" value="UbiB_kinase"/>
</dbReference>
<dbReference type="NCBIfam" id="NF003404">
    <property type="entry name" value="PRK04750.1"/>
    <property type="match status" value="1"/>
</dbReference>
<dbReference type="NCBIfam" id="TIGR01982">
    <property type="entry name" value="UbiB"/>
    <property type="match status" value="1"/>
</dbReference>
<dbReference type="PANTHER" id="PTHR10566">
    <property type="entry name" value="CHAPERONE-ACTIVITY OF BC1 COMPLEX CABC1 -RELATED"/>
    <property type="match status" value="1"/>
</dbReference>
<dbReference type="PANTHER" id="PTHR10566:SF113">
    <property type="entry name" value="PROTEIN ACTIVITY OF BC1 COMPLEX KINASE 7, CHLOROPLASTIC"/>
    <property type="match status" value="1"/>
</dbReference>
<dbReference type="Pfam" id="PF03109">
    <property type="entry name" value="ABC1"/>
    <property type="match status" value="1"/>
</dbReference>
<dbReference type="SUPFAM" id="SSF56112">
    <property type="entry name" value="Protein kinase-like (PK-like)"/>
    <property type="match status" value="1"/>
</dbReference>
<name>UBIB_BURP6</name>
<sequence length="525" mass="59775">MRIFRFVKIVFTVIRFGLDEVMLSRIENPRVKLLLRITTIGRRFADPPAVRLRRALESLGPIFVKFGQVLSTRRDLLPVDFANELAKLQDQVPPFDSAVAIAIVEKSLGARIDVLFDEFERVPVASASIAQVHFAKLKQGEHKGKAVAVKVLRPNMLPVIDSDLALMRDIATWAERLWADGRRLKPREVVAEFDKYLHDELDLMREAANGSQLRRNFAGLDLLLVPEMFWDYSTPAVLVMERMTGVPISQVDTLRAAGVDIPKLAREGVEIFFTQVFRDGFFHADMHPGNIQVSLDPKHFGRYIALDFGIVGALSDFDKNYLAQNFLAFFKRDYHRVATLHLESGWVPPDTRVEELESAIRAVCEPYFDRALKDISLGQVLMRLFSTSRRFNVEIQPQLVLLQKTMLNVEGLGRSLDPELDLWKTAKPYLERWMTEQIGLRGWYERFKVEAPQWSKTLPQLPRLVHQALISHHEAPRAISDDLIRQILVEQRRTNRLLQALLVFGLAVGAGAVIARVLIVLAYGG</sequence>
<accession>A3N5V1</accession>
<comment type="function">
    <text evidence="1">Is probably a protein kinase regulator of UbiI activity which is involved in aerobic coenzyme Q (ubiquinone) biosynthesis.</text>
</comment>
<comment type="pathway">
    <text>Cofactor biosynthesis; ubiquinone biosynthesis [regulation].</text>
</comment>
<comment type="subcellular location">
    <subcellularLocation>
        <location evidence="1">Cell inner membrane</location>
        <topology evidence="1">Single-pass membrane protein</topology>
    </subcellularLocation>
</comment>
<comment type="similarity">
    <text evidence="1">Belongs to the ABC1 family. UbiB subfamily.</text>
</comment>
<gene>
    <name evidence="1" type="primary">ubiB</name>
    <name type="ordered locus">BURPS668_0670</name>
</gene>
<reference key="1">
    <citation type="journal article" date="2010" name="Genome Biol. Evol.">
        <title>Continuing evolution of Burkholderia mallei through genome reduction and large-scale rearrangements.</title>
        <authorList>
            <person name="Losada L."/>
            <person name="Ronning C.M."/>
            <person name="DeShazer D."/>
            <person name="Woods D."/>
            <person name="Fedorova N."/>
            <person name="Kim H.S."/>
            <person name="Shabalina S.A."/>
            <person name="Pearson T.R."/>
            <person name="Brinkac L."/>
            <person name="Tan P."/>
            <person name="Nandi T."/>
            <person name="Crabtree J."/>
            <person name="Badger J."/>
            <person name="Beckstrom-Sternberg S."/>
            <person name="Saqib M."/>
            <person name="Schutzer S.E."/>
            <person name="Keim P."/>
            <person name="Nierman W.C."/>
        </authorList>
    </citation>
    <scope>NUCLEOTIDE SEQUENCE [LARGE SCALE GENOMIC DNA]</scope>
    <source>
        <strain>668</strain>
    </source>
</reference>
<protein>
    <recommendedName>
        <fullName evidence="1">Probable protein kinase UbiB</fullName>
        <ecNumber evidence="1">2.7.-.-</ecNumber>
    </recommendedName>
    <alternativeName>
        <fullName evidence="1">Ubiquinone biosynthesis protein UbiB</fullName>
    </alternativeName>
</protein>
<evidence type="ECO:0000255" key="1">
    <source>
        <dbReference type="HAMAP-Rule" id="MF_00414"/>
    </source>
</evidence>
<organism>
    <name type="scientific">Burkholderia pseudomallei (strain 668)</name>
    <dbReference type="NCBI Taxonomy" id="320373"/>
    <lineage>
        <taxon>Bacteria</taxon>
        <taxon>Pseudomonadati</taxon>
        <taxon>Pseudomonadota</taxon>
        <taxon>Betaproteobacteria</taxon>
        <taxon>Burkholderiales</taxon>
        <taxon>Burkholderiaceae</taxon>
        <taxon>Burkholderia</taxon>
        <taxon>pseudomallei group</taxon>
    </lineage>
</organism>